<accession>P09210</accession>
<accession>Q12759</accession>
<accession>Q16491</accession>
<accession>Q9NTY6</accession>
<keyword id="KW-0002">3D-structure</keyword>
<keyword id="KW-0007">Acetylation</keyword>
<keyword id="KW-0963">Cytoplasm</keyword>
<keyword id="KW-0903">Direct protein sequencing</keyword>
<keyword id="KW-1267">Proteomics identification</keyword>
<keyword id="KW-1185">Reference proteome</keyword>
<keyword id="KW-0808">Transferase</keyword>
<proteinExistence type="evidence at protein level"/>
<comment type="function">
    <text evidence="1">Catalyzes the conjugation of glutathione to a large variety of electrophilic compounds.</text>
</comment>
<comment type="catalytic activity">
    <reaction evidence="1">
        <text>RX + glutathione = an S-substituted glutathione + a halide anion + H(+)</text>
        <dbReference type="Rhea" id="RHEA:16437"/>
        <dbReference type="ChEBI" id="CHEBI:15378"/>
        <dbReference type="ChEBI" id="CHEBI:16042"/>
        <dbReference type="ChEBI" id="CHEBI:17792"/>
        <dbReference type="ChEBI" id="CHEBI:57925"/>
        <dbReference type="ChEBI" id="CHEBI:90779"/>
        <dbReference type="EC" id="2.5.1.18"/>
    </reaction>
    <physiologicalReaction direction="left-to-right" evidence="1">
        <dbReference type="Rhea" id="RHEA:16438"/>
    </physiologicalReaction>
</comment>
<comment type="subunit">
    <text evidence="8 10">Homodimer or heterodimer of GSTA1 and GSTA2.</text>
</comment>
<comment type="interaction">
    <interactant intactId="EBI-10196201">
        <id>P09210</id>
    </interactant>
    <interactant intactId="EBI-752440">
        <id>O15217</id>
        <label>GSTA4</label>
    </interactant>
    <organismsDiffer>false</organismsDiffer>
    <experiments>13</experiments>
</comment>
<comment type="interaction">
    <interactant intactId="EBI-10196201">
        <id>P09210</id>
    </interactant>
    <interactant intactId="EBI-13328621">
        <id>Q7RTV2</id>
        <label>GSTA5</label>
    </interactant>
    <organismsDiffer>false</organismsDiffer>
    <experiments>5</experiments>
</comment>
<comment type="subcellular location">
    <subcellularLocation>
        <location>Cytoplasm</location>
    </subcellularLocation>
</comment>
<comment type="tissue specificity">
    <text evidence="9">Liver.</text>
</comment>
<comment type="similarity">
    <text evidence="12">Belongs to the GST superfamily. Alpha family.</text>
</comment>
<organism>
    <name type="scientific">Homo sapiens</name>
    <name type="common">Human</name>
    <dbReference type="NCBI Taxonomy" id="9606"/>
    <lineage>
        <taxon>Eukaryota</taxon>
        <taxon>Metazoa</taxon>
        <taxon>Chordata</taxon>
        <taxon>Craniata</taxon>
        <taxon>Vertebrata</taxon>
        <taxon>Euteleostomi</taxon>
        <taxon>Mammalia</taxon>
        <taxon>Eutheria</taxon>
        <taxon>Euarchontoglires</taxon>
        <taxon>Primates</taxon>
        <taxon>Haplorrhini</taxon>
        <taxon>Catarrhini</taxon>
        <taxon>Hominidae</taxon>
        <taxon>Homo</taxon>
    </lineage>
</organism>
<protein>
    <recommendedName>
        <fullName>Glutathione S-transferase A2</fullName>
        <ecNumber evidence="1">2.5.1.18</ecNumber>
    </recommendedName>
    <alternativeName>
        <fullName>GST HA subunit 2</fullName>
    </alternativeName>
    <alternativeName>
        <fullName>GST class-alpha member 2</fullName>
    </alternativeName>
    <alternativeName>
        <fullName>GST-gamma</fullName>
    </alternativeName>
    <alternativeName>
        <fullName>GSTA2-2</fullName>
    </alternativeName>
    <alternativeName>
        <fullName>GTH2</fullName>
    </alternativeName>
</protein>
<evidence type="ECO:0000250" key="1">
    <source>
        <dbReference type="UniProtKB" id="P10648"/>
    </source>
</evidence>
<evidence type="ECO:0000250" key="2">
    <source>
        <dbReference type="UniProtKB" id="P30115"/>
    </source>
</evidence>
<evidence type="ECO:0000256" key="3">
    <source>
        <dbReference type="SAM" id="MobiDB-lite"/>
    </source>
</evidence>
<evidence type="ECO:0000269" key="4">
    <source>
    </source>
</evidence>
<evidence type="ECO:0000269" key="5">
    <source>
    </source>
</evidence>
<evidence type="ECO:0000269" key="6">
    <source>
    </source>
</evidence>
<evidence type="ECO:0000269" key="7">
    <source>
    </source>
</evidence>
<evidence type="ECO:0000269" key="8">
    <source>
    </source>
</evidence>
<evidence type="ECO:0000269" key="9">
    <source>
    </source>
</evidence>
<evidence type="ECO:0000269" key="10">
    <source>
    </source>
</evidence>
<evidence type="ECO:0000269" key="11">
    <source>
    </source>
</evidence>
<evidence type="ECO:0000305" key="12"/>
<evidence type="ECO:0007744" key="13">
    <source>
    </source>
</evidence>
<evidence type="ECO:0007829" key="14">
    <source>
        <dbReference type="PDB" id="2VCT"/>
    </source>
</evidence>
<evidence type="ECO:0007829" key="15">
    <source>
        <dbReference type="PDB" id="4ACS"/>
    </source>
</evidence>
<sequence>MAEKPKLHYSNIRGRMESIRWLLAAAGVEFEEKFIKSAEDLDKLRNDGYLMFQQVPMVEIDGMKLVQTRAILNYIASKYNLYGKDIKEKALIDMYIEGIADLGEMILLLPFSQPEEQDAKLALIQEKTKNRYFPAFEKVLKSHGQDYLVGNKLSRADIHLVELLYYVEELDSSLISSFPLLKALKTRISNLPTVKKFLQPGSPRKPPMDEKSLEESRKIFRF</sequence>
<reference key="1">
    <citation type="journal article" date="1987" name="Biochem. Biophys. Res. Commun.">
        <title>The basic glutathione S-transferases from human livers are products of separate genes.</title>
        <authorList>
            <person name="Rhoads D.M."/>
            <person name="Zarlengo R.P."/>
            <person name="Tu C.-P.D."/>
        </authorList>
    </citation>
    <scope>NUCLEOTIDE SEQUENCE [MRNA]</scope>
    <scope>VARIANT THR-112</scope>
    <scope>TISSUE SPECIFICITY</scope>
</reference>
<reference key="2">
    <citation type="journal article" date="1992" name="Arch. Biochem. Biophys.">
        <title>Isolation and characterization of the human glutathione S-transferase A2 subunit gene.</title>
        <authorList>
            <person name="Rohrdanz E."/>
            <person name="Nguyen T."/>
            <person name="Pickett C.B."/>
        </authorList>
    </citation>
    <scope>NUCLEOTIDE SEQUENCE [GENOMIC DNA]</scope>
    <scope>VARIANT ALA-210</scope>
    <source>
        <tissue>Liver</tissue>
    </source>
</reference>
<reference key="3">
    <citation type="journal article" date="1992" name="Biochem. J.">
        <title>Cloning, sequencing and characterization of the human alpha glutathione S-transferase gene corresponding to the cDNA clone pGTH2.</title>
        <authorList>
            <person name="Klone A."/>
            <person name="Hussnatter R."/>
            <person name="Sies H."/>
        </authorList>
    </citation>
    <scope>NUCLEOTIDE SEQUENCE [GENOMIC DNA]</scope>
    <scope>VARIANT ALA-210</scope>
    <source>
        <tissue>Blood</tissue>
    </source>
</reference>
<reference key="4">
    <citation type="journal article" date="2003" name="Nature">
        <title>The DNA sequence and analysis of human chromosome 6.</title>
        <authorList>
            <person name="Mungall A.J."/>
            <person name="Palmer S.A."/>
            <person name="Sims S.K."/>
            <person name="Edwards C.A."/>
            <person name="Ashurst J.L."/>
            <person name="Wilming L."/>
            <person name="Jones M.C."/>
            <person name="Horton R."/>
            <person name="Hunt S.E."/>
            <person name="Scott C.E."/>
            <person name="Gilbert J.G.R."/>
            <person name="Clamp M.E."/>
            <person name="Bethel G."/>
            <person name="Milne S."/>
            <person name="Ainscough R."/>
            <person name="Almeida J.P."/>
            <person name="Ambrose K.D."/>
            <person name="Andrews T.D."/>
            <person name="Ashwell R.I.S."/>
            <person name="Babbage A.K."/>
            <person name="Bagguley C.L."/>
            <person name="Bailey J."/>
            <person name="Banerjee R."/>
            <person name="Barker D.J."/>
            <person name="Barlow K.F."/>
            <person name="Bates K."/>
            <person name="Beare D.M."/>
            <person name="Beasley H."/>
            <person name="Beasley O."/>
            <person name="Bird C.P."/>
            <person name="Blakey S.E."/>
            <person name="Bray-Allen S."/>
            <person name="Brook J."/>
            <person name="Brown A.J."/>
            <person name="Brown J.Y."/>
            <person name="Burford D.C."/>
            <person name="Burrill W."/>
            <person name="Burton J."/>
            <person name="Carder C."/>
            <person name="Carter N.P."/>
            <person name="Chapman J.C."/>
            <person name="Clark S.Y."/>
            <person name="Clark G."/>
            <person name="Clee C.M."/>
            <person name="Clegg S."/>
            <person name="Cobley V."/>
            <person name="Collier R.E."/>
            <person name="Collins J.E."/>
            <person name="Colman L.K."/>
            <person name="Corby N.R."/>
            <person name="Coville G.J."/>
            <person name="Culley K.M."/>
            <person name="Dhami P."/>
            <person name="Davies J."/>
            <person name="Dunn M."/>
            <person name="Earthrowl M.E."/>
            <person name="Ellington A.E."/>
            <person name="Evans K.A."/>
            <person name="Faulkner L."/>
            <person name="Francis M.D."/>
            <person name="Frankish A."/>
            <person name="Frankland J."/>
            <person name="French L."/>
            <person name="Garner P."/>
            <person name="Garnett J."/>
            <person name="Ghori M.J."/>
            <person name="Gilby L.M."/>
            <person name="Gillson C.J."/>
            <person name="Glithero R.J."/>
            <person name="Grafham D.V."/>
            <person name="Grant M."/>
            <person name="Gribble S."/>
            <person name="Griffiths C."/>
            <person name="Griffiths M.N.D."/>
            <person name="Hall R."/>
            <person name="Halls K.S."/>
            <person name="Hammond S."/>
            <person name="Harley J.L."/>
            <person name="Hart E.A."/>
            <person name="Heath P.D."/>
            <person name="Heathcott R."/>
            <person name="Holmes S.J."/>
            <person name="Howden P.J."/>
            <person name="Howe K.L."/>
            <person name="Howell G.R."/>
            <person name="Huckle E."/>
            <person name="Humphray S.J."/>
            <person name="Humphries M.D."/>
            <person name="Hunt A.R."/>
            <person name="Johnson C.M."/>
            <person name="Joy A.A."/>
            <person name="Kay M."/>
            <person name="Keenan S.J."/>
            <person name="Kimberley A.M."/>
            <person name="King A."/>
            <person name="Laird G.K."/>
            <person name="Langford C."/>
            <person name="Lawlor S."/>
            <person name="Leongamornlert D.A."/>
            <person name="Leversha M."/>
            <person name="Lloyd C.R."/>
            <person name="Lloyd D.M."/>
            <person name="Loveland J.E."/>
            <person name="Lovell J."/>
            <person name="Martin S."/>
            <person name="Mashreghi-Mohammadi M."/>
            <person name="Maslen G.L."/>
            <person name="Matthews L."/>
            <person name="McCann O.T."/>
            <person name="McLaren S.J."/>
            <person name="McLay K."/>
            <person name="McMurray A."/>
            <person name="Moore M.J.F."/>
            <person name="Mullikin J.C."/>
            <person name="Niblett D."/>
            <person name="Nickerson T."/>
            <person name="Novik K.L."/>
            <person name="Oliver K."/>
            <person name="Overton-Larty E.K."/>
            <person name="Parker A."/>
            <person name="Patel R."/>
            <person name="Pearce A.V."/>
            <person name="Peck A.I."/>
            <person name="Phillimore B.J.C.T."/>
            <person name="Phillips S."/>
            <person name="Plumb R.W."/>
            <person name="Porter K.M."/>
            <person name="Ramsey Y."/>
            <person name="Ranby S.A."/>
            <person name="Rice C.M."/>
            <person name="Ross M.T."/>
            <person name="Searle S.M."/>
            <person name="Sehra H.K."/>
            <person name="Sheridan E."/>
            <person name="Skuce C.D."/>
            <person name="Smith S."/>
            <person name="Smith M."/>
            <person name="Spraggon L."/>
            <person name="Squares S.L."/>
            <person name="Steward C.A."/>
            <person name="Sycamore N."/>
            <person name="Tamlyn-Hall G."/>
            <person name="Tester J."/>
            <person name="Theaker A.J."/>
            <person name="Thomas D.W."/>
            <person name="Thorpe A."/>
            <person name="Tracey A."/>
            <person name="Tromans A."/>
            <person name="Tubby B."/>
            <person name="Wall M."/>
            <person name="Wallis J.M."/>
            <person name="West A.P."/>
            <person name="White S.S."/>
            <person name="Whitehead S.L."/>
            <person name="Whittaker H."/>
            <person name="Wild A."/>
            <person name="Willey D.J."/>
            <person name="Wilmer T.E."/>
            <person name="Wood J.M."/>
            <person name="Wray P.W."/>
            <person name="Wyatt J.C."/>
            <person name="Young L."/>
            <person name="Younger R.M."/>
            <person name="Bentley D.R."/>
            <person name="Coulson A."/>
            <person name="Durbin R.M."/>
            <person name="Hubbard T."/>
            <person name="Sulston J.E."/>
            <person name="Dunham I."/>
            <person name="Rogers J."/>
            <person name="Beck S."/>
        </authorList>
    </citation>
    <scope>NUCLEOTIDE SEQUENCE [LARGE SCALE GENOMIC DNA]</scope>
</reference>
<reference key="5">
    <citation type="journal article" date="2004" name="Genome Res.">
        <title>The status, quality, and expansion of the NIH full-length cDNA project: the Mammalian Gene Collection (MGC).</title>
        <authorList>
            <consortium name="The MGC Project Team"/>
        </authorList>
    </citation>
    <scope>NUCLEOTIDE SEQUENCE [LARGE SCALE MRNA]</scope>
    <scope>VARIANT THR-112</scope>
    <source>
        <tissue>Lung</tissue>
    </source>
</reference>
<reference key="6">
    <citation type="journal article" date="1993" name="Biochim. Biophys. Acta">
        <title>Characterization of two novel subunits of the alpha-class glutathione S-transferases of human liver.</title>
        <authorList>
            <person name="Ahmad H."/>
            <person name="Singhal S.S."/>
            <person name="Saxena M."/>
            <person name="Awasthi Y.C."/>
        </authorList>
    </citation>
    <scope>PROTEIN SEQUENCE OF 2-170; 188-195 AND 209-222</scope>
</reference>
<reference key="7">
    <citation type="journal article" date="1989" name="Biochem. J.">
        <title>Evidence that glutathione S-transferases B1B1 and B2B2 are the products of separate genes and that their expression in human liver is subject to inter-individual variation. Molecular relationships between the B1 and B2 subunits and other alpha class glutathione S-transferases.</title>
        <authorList>
            <person name="Hayes J.D."/>
            <person name="Kerr L.A."/>
            <person name="Cronshaw A.D."/>
        </authorList>
    </citation>
    <scope>PROTEIN SEQUENCE OF 63-155 AND 208-222</scope>
</reference>
<reference key="8">
    <citation type="journal article" date="1994" name="Proteins">
        <title>A surface mutant (G82R) of a human alpha-glutathione S-transferase shows decreased thermal stability and a new mode of molecular association in the crystal.</title>
        <authorList>
            <person name="Zeng K."/>
            <person name="Rose J.P."/>
            <person name="Chen H.C."/>
            <person name="Strickland C.L."/>
            <person name="Tu C.P."/>
            <person name="Wang B.C."/>
        </authorList>
    </citation>
    <scope>X-RAY CRYSTALLOGRAPHY (2.5 ANGSTROMS)</scope>
    <scope>SUBUNIT</scope>
</reference>
<reference key="9">
    <citation type="journal article" date="2010" name="J. Mol. Biol.">
        <title>Structural basis for featuring of steroid isomerase activity in alpha class glutathione transferases.</title>
        <authorList>
            <person name="Tars K."/>
            <person name="Olin B."/>
            <person name="Mannervik B."/>
        </authorList>
    </citation>
    <scope>X-RAY CRYSTALLOGRAPHY (2.1 ANGSTROMS) IN COMPLEX WITH GLUTATHIONE AND DELTA5-ANDROSTENE-3-17-DIONE</scope>
    <scope>SUBUNIT</scope>
</reference>
<reference key="10">
    <citation type="journal article" date="2001" name="Pharmacogenetics">
        <title>Polymorphism of human alpha class glutathione transferases.</title>
        <authorList>
            <person name="Tetlow N."/>
            <person name="Liu D."/>
            <person name="Board P."/>
        </authorList>
    </citation>
    <scope>VARIANTS THR-112 AND ALA-210</scope>
</reference>
<reference key="11">
    <citation type="journal article" date="2014" name="J. Proteomics">
        <title>An enzyme assisted RP-RPLC approach for in-depth analysis of human liver phosphoproteome.</title>
        <authorList>
            <person name="Bian Y."/>
            <person name="Song C."/>
            <person name="Cheng K."/>
            <person name="Dong M."/>
            <person name="Wang F."/>
            <person name="Huang J."/>
            <person name="Sun D."/>
            <person name="Wang L."/>
            <person name="Ye M."/>
            <person name="Zou H."/>
        </authorList>
    </citation>
    <scope>VARIANT [LARGE SCALE ANALYSIS] THR-112</scope>
    <scope>IDENTIFICATION BY MASS SPECTROMETRY [LARGE SCALE ANALYSIS]</scope>
    <source>
        <tissue>Liver</tissue>
    </source>
</reference>
<name>GSTA2_HUMAN</name>
<feature type="initiator methionine" description="Removed" evidence="2 11">
    <location>
        <position position="1"/>
    </location>
</feature>
<feature type="chain" id="PRO_0000185784" description="Glutathione S-transferase A2">
    <location>
        <begin position="2"/>
        <end position="222"/>
    </location>
</feature>
<feature type="domain" description="GST N-terminal">
    <location>
        <begin position="3"/>
        <end position="83"/>
    </location>
</feature>
<feature type="domain" description="GST C-terminal">
    <location>
        <begin position="85"/>
        <end position="207"/>
    </location>
</feature>
<feature type="region of interest" description="Disordered" evidence="3">
    <location>
        <begin position="199"/>
        <end position="222"/>
    </location>
</feature>
<feature type="compositionally biased region" description="Basic and acidic residues" evidence="3">
    <location>
        <begin position="206"/>
        <end position="222"/>
    </location>
</feature>
<feature type="binding site" evidence="8">
    <location>
        <position position="9"/>
    </location>
    <ligand>
        <name>glutathione</name>
        <dbReference type="ChEBI" id="CHEBI:57925"/>
    </ligand>
</feature>
<feature type="binding site" evidence="8">
    <location>
        <position position="45"/>
    </location>
    <ligand>
        <name>glutathione</name>
        <dbReference type="ChEBI" id="CHEBI:57925"/>
    </ligand>
</feature>
<feature type="binding site" evidence="8">
    <location>
        <begin position="54"/>
        <end position="55"/>
    </location>
    <ligand>
        <name>glutathione</name>
        <dbReference type="ChEBI" id="CHEBI:57925"/>
    </ligand>
</feature>
<feature type="binding site" evidence="8">
    <location>
        <begin position="67"/>
        <end position="68"/>
    </location>
    <ligand>
        <name>glutathione</name>
        <dbReference type="ChEBI" id="CHEBI:57925"/>
    </ligand>
</feature>
<feature type="modified residue" description="N-acetylalanine" evidence="2">
    <location>
        <position position="2"/>
    </location>
</feature>
<feature type="modified residue" description="N6-succinyllysine" evidence="2">
    <location>
        <position position="4"/>
    </location>
</feature>
<feature type="sequence variant" id="VAR_014495" description="In dbSNP:rs2234951.">
    <original>P</original>
    <variation>S</variation>
    <location>
        <position position="110"/>
    </location>
</feature>
<feature type="sequence variant" id="VAR_012205" description="In dbSNP:rs2180314." evidence="4 7 9 13">
    <original>S</original>
    <variation>T</variation>
    <location>
        <position position="112"/>
    </location>
</feature>
<feature type="sequence variant" id="VAR_014496" description="In dbSNP:rs2266631.">
    <original>V</original>
    <variation>A</variation>
    <location>
        <position position="149"/>
    </location>
</feature>
<feature type="sequence variant" id="VAR_012206" description="In dbSNP:rs6577." evidence="4 5 6">
    <original>E</original>
    <variation>A</variation>
    <location>
        <position position="210"/>
    </location>
</feature>
<feature type="sequence conflict" description="In Ref. 6; AA sequence." evidence="12" ref="6">
    <original>SNI</original>
    <variation>FNA</variation>
    <location>
        <begin position="10"/>
        <end position="12"/>
    </location>
</feature>
<feature type="sequence conflict" description="In Ref. 3; CAA46642." evidence="12" ref="3">
    <original>I</original>
    <variation>T</variation>
    <location>
        <position position="12"/>
    </location>
</feature>
<feature type="sequence conflict" description="In Ref. 6; AA sequence." evidence="12" ref="6">
    <original>I</original>
    <variation>T</variation>
    <location>
        <position position="19"/>
    </location>
</feature>
<feature type="sequence conflict" description="In Ref. 6; AA sequence." evidence="12" ref="6">
    <original>K</original>
    <variation>R</variation>
    <location>
        <position position="89"/>
    </location>
</feature>
<feature type="sequence conflict" description="In Ref. 6; AA sequence." evidence="12" ref="6">
    <original>T</original>
    <variation>I</variation>
    <location>
        <position position="128"/>
    </location>
</feature>
<feature type="strand" evidence="14">
    <location>
        <begin position="6"/>
        <end position="9"/>
    </location>
</feature>
<feature type="strand" evidence="15">
    <location>
        <begin position="11"/>
        <end position="13"/>
    </location>
</feature>
<feature type="turn" evidence="14">
    <location>
        <begin position="14"/>
        <end position="16"/>
    </location>
</feature>
<feature type="helix" evidence="14">
    <location>
        <begin position="17"/>
        <end position="25"/>
    </location>
</feature>
<feature type="strand" evidence="14">
    <location>
        <begin position="31"/>
        <end position="34"/>
    </location>
</feature>
<feature type="helix" evidence="14">
    <location>
        <begin position="38"/>
        <end position="46"/>
    </location>
</feature>
<feature type="strand" evidence="14">
    <location>
        <begin position="57"/>
        <end position="60"/>
    </location>
</feature>
<feature type="strand" evidence="14">
    <location>
        <begin position="63"/>
        <end position="67"/>
    </location>
</feature>
<feature type="helix" evidence="14">
    <location>
        <begin position="68"/>
        <end position="78"/>
    </location>
</feature>
<feature type="helix" evidence="14">
    <location>
        <begin position="86"/>
        <end position="108"/>
    </location>
</feature>
<feature type="helix" evidence="14">
    <location>
        <begin position="109"/>
        <end position="111"/>
    </location>
</feature>
<feature type="turn" evidence="14">
    <location>
        <begin position="114"/>
        <end position="116"/>
    </location>
</feature>
<feature type="helix" evidence="14">
    <location>
        <begin position="117"/>
        <end position="130"/>
    </location>
</feature>
<feature type="helix" evidence="14">
    <location>
        <begin position="132"/>
        <end position="143"/>
    </location>
</feature>
<feature type="strand" evidence="14">
    <location>
        <begin position="146"/>
        <end position="149"/>
    </location>
</feature>
<feature type="helix" evidence="14">
    <location>
        <begin position="155"/>
        <end position="170"/>
    </location>
</feature>
<feature type="turn" evidence="14">
    <location>
        <begin position="172"/>
        <end position="177"/>
    </location>
</feature>
<feature type="helix" evidence="14">
    <location>
        <begin position="179"/>
        <end position="190"/>
    </location>
</feature>
<feature type="helix" evidence="14">
    <location>
        <begin position="192"/>
        <end position="197"/>
    </location>
</feature>
<feature type="helix" evidence="14">
    <location>
        <begin position="210"/>
        <end position="220"/>
    </location>
</feature>
<dbReference type="EC" id="2.5.1.18" evidence="1"/>
<dbReference type="EMBL" id="M16594">
    <property type="protein sequence ID" value="AAA52616.1"/>
    <property type="molecule type" value="mRNA"/>
</dbReference>
<dbReference type="EMBL" id="S45640">
    <property type="protein sequence ID" value="AAB23672.1"/>
    <property type="molecule type" value="Genomic_DNA"/>
</dbReference>
<dbReference type="EMBL" id="S45627">
    <property type="protein sequence ID" value="AAB23672.1"/>
    <property type="status" value="JOINED"/>
    <property type="molecule type" value="Genomic_DNA"/>
</dbReference>
<dbReference type="EMBL" id="S45629">
    <property type="protein sequence ID" value="AAB23672.1"/>
    <property type="status" value="JOINED"/>
    <property type="molecule type" value="Genomic_DNA"/>
</dbReference>
<dbReference type="EMBL" id="S45636">
    <property type="protein sequence ID" value="AAB23672.1"/>
    <property type="status" value="JOINED"/>
    <property type="molecule type" value="Genomic_DNA"/>
</dbReference>
<dbReference type="EMBL" id="S45637">
    <property type="protein sequence ID" value="AAB23672.1"/>
    <property type="status" value="JOINED"/>
    <property type="molecule type" value="Genomic_DNA"/>
</dbReference>
<dbReference type="EMBL" id="S45639">
    <property type="protein sequence ID" value="AAB23672.1"/>
    <property type="status" value="JOINED"/>
    <property type="molecule type" value="Genomic_DNA"/>
</dbReference>
<dbReference type="EMBL" id="X65727">
    <property type="protein sequence ID" value="CAA46642.1"/>
    <property type="molecule type" value="Genomic_DNA"/>
</dbReference>
<dbReference type="EMBL" id="X65728">
    <property type="protein sequence ID" value="CAA46642.1"/>
    <property type="status" value="JOINED"/>
    <property type="molecule type" value="Genomic_DNA"/>
</dbReference>
<dbReference type="EMBL" id="X65729">
    <property type="protein sequence ID" value="CAA46642.1"/>
    <property type="status" value="JOINED"/>
    <property type="molecule type" value="Genomic_DNA"/>
</dbReference>
<dbReference type="EMBL" id="X65730">
    <property type="protein sequence ID" value="CAA46642.1"/>
    <property type="status" value="JOINED"/>
    <property type="molecule type" value="Genomic_DNA"/>
</dbReference>
<dbReference type="EMBL" id="X65731">
    <property type="protein sequence ID" value="CAA46642.1"/>
    <property type="status" value="JOINED"/>
    <property type="molecule type" value="Genomic_DNA"/>
</dbReference>
<dbReference type="EMBL" id="X65732">
    <property type="protein sequence ID" value="CAA46642.1"/>
    <property type="status" value="JOINED"/>
    <property type="molecule type" value="Genomic_DNA"/>
</dbReference>
<dbReference type="EMBL" id="AL109918">
    <property type="status" value="NOT_ANNOTATED_CDS"/>
    <property type="molecule type" value="Genomic_DNA"/>
</dbReference>
<dbReference type="EMBL" id="BC002895">
    <property type="protein sequence ID" value="AAH02895.1"/>
    <property type="molecule type" value="mRNA"/>
</dbReference>
<dbReference type="CCDS" id="CCDS4944.1"/>
<dbReference type="PIR" id="S24330">
    <property type="entry name" value="S24330"/>
</dbReference>
<dbReference type="PIR" id="S29658">
    <property type="entry name" value="S29658"/>
</dbReference>
<dbReference type="RefSeq" id="NP_000837.3">
    <property type="nucleotide sequence ID" value="NM_000846.4"/>
</dbReference>
<dbReference type="RefSeq" id="XP_011512834.1">
    <property type="nucleotide sequence ID" value="XM_011514532.2"/>
</dbReference>
<dbReference type="RefSeq" id="XP_047274640.1">
    <property type="nucleotide sequence ID" value="XM_047418684.1"/>
</dbReference>
<dbReference type="RefSeq" id="XP_054211232.1">
    <property type="nucleotide sequence ID" value="XM_054355257.1"/>
</dbReference>
<dbReference type="PDB" id="1AGS">
    <property type="method" value="X-ray"/>
    <property type="resolution" value="2.50 A"/>
    <property type="chains" value="A/B=2-222"/>
</dbReference>
<dbReference type="PDB" id="2VCT">
    <property type="method" value="X-ray"/>
    <property type="resolution" value="2.10 A"/>
    <property type="chains" value="A/B/C/D/E/F/G/H=1-222"/>
</dbReference>
<dbReference type="PDB" id="2WJU">
    <property type="method" value="X-ray"/>
    <property type="resolution" value="2.30 A"/>
    <property type="chains" value="A/B/C/D/E/F/G/H=1-222"/>
</dbReference>
<dbReference type="PDB" id="4ACS">
    <property type="method" value="X-ray"/>
    <property type="resolution" value="2.10 A"/>
    <property type="chains" value="A/B/C/D=1-221"/>
</dbReference>
<dbReference type="PDBsum" id="1AGS"/>
<dbReference type="PDBsum" id="2VCT"/>
<dbReference type="PDBsum" id="2WJU"/>
<dbReference type="PDBsum" id="4ACS"/>
<dbReference type="SMR" id="P09210"/>
<dbReference type="BioGRID" id="109194">
    <property type="interactions" value="10"/>
</dbReference>
<dbReference type="FunCoup" id="P09210">
    <property type="interactions" value="162"/>
</dbReference>
<dbReference type="IntAct" id="P09210">
    <property type="interactions" value="9"/>
</dbReference>
<dbReference type="STRING" id="9606.ENSP00000420168"/>
<dbReference type="BindingDB" id="P09210"/>
<dbReference type="ChEMBL" id="CHEMBL2241"/>
<dbReference type="DrugBank" id="DB14001">
    <property type="generic name" value="alpha-Tocopherol succinate"/>
</dbReference>
<dbReference type="DrugBank" id="DB00321">
    <property type="generic name" value="Amitriptyline"/>
</dbReference>
<dbReference type="DrugBank" id="DB00993">
    <property type="generic name" value="Azathioprine"/>
</dbReference>
<dbReference type="DrugBank" id="DB01008">
    <property type="generic name" value="Busulfan"/>
</dbReference>
<dbReference type="DrugBank" id="DB00291">
    <property type="generic name" value="Chlorambucil"/>
</dbReference>
<dbReference type="DrugBank" id="DB00608">
    <property type="generic name" value="Chloroquine"/>
</dbReference>
<dbReference type="DrugBank" id="DB00636">
    <property type="generic name" value="Clofibrate"/>
</dbReference>
<dbReference type="DrugBank" id="DB14002">
    <property type="generic name" value="D-alpha-Tocopherol acetate"/>
</dbReference>
<dbReference type="DrugBank" id="DB03619">
    <property type="generic name" value="Deoxycholic acid"/>
</dbReference>
<dbReference type="DrugBank" id="DB00903">
    <property type="generic name" value="Etacrynic acid"/>
</dbReference>
<dbReference type="DrugBank" id="DB00143">
    <property type="generic name" value="Glutathione"/>
</dbReference>
<dbReference type="DrugBank" id="DB03310">
    <property type="generic name" value="Glutathione disulfide"/>
</dbReference>
<dbReference type="DrugBank" id="DB00163">
    <property type="generic name" value="Vitamin E"/>
</dbReference>
<dbReference type="GlyGen" id="P09210">
    <property type="glycosylation" value="1 site, 1 O-linked glycan (1 site)"/>
</dbReference>
<dbReference type="iPTMnet" id="P09210"/>
<dbReference type="PhosphoSitePlus" id="P09210"/>
<dbReference type="BioMuta" id="GSTA2"/>
<dbReference type="DMDM" id="126302551"/>
<dbReference type="REPRODUCTION-2DPAGE" id="IPI00745233"/>
<dbReference type="jPOST" id="P09210"/>
<dbReference type="MassIVE" id="P09210"/>
<dbReference type="PaxDb" id="9606-ENSP00000420168"/>
<dbReference type="PeptideAtlas" id="P09210"/>
<dbReference type="ProteomicsDB" id="52206"/>
<dbReference type="Antibodypedia" id="30929">
    <property type="antibodies" value="224 antibodies from 28 providers"/>
</dbReference>
<dbReference type="DNASU" id="2939"/>
<dbReference type="Ensembl" id="ENST00000493422.3">
    <property type="protein sequence ID" value="ENSP00000420168.1"/>
    <property type="gene ID" value="ENSG00000244067.3"/>
</dbReference>
<dbReference type="GeneID" id="2939"/>
<dbReference type="KEGG" id="hsa:2939"/>
<dbReference type="MANE-Select" id="ENST00000493422.3">
    <property type="protein sequence ID" value="ENSP00000420168.1"/>
    <property type="RefSeq nucleotide sequence ID" value="NM_000846.5"/>
    <property type="RefSeq protein sequence ID" value="NP_000837.3"/>
</dbReference>
<dbReference type="UCSC" id="uc003pay.4">
    <property type="organism name" value="human"/>
</dbReference>
<dbReference type="AGR" id="HGNC:4627"/>
<dbReference type="CTD" id="2939"/>
<dbReference type="DisGeNET" id="2939"/>
<dbReference type="GeneCards" id="GSTA2"/>
<dbReference type="HGNC" id="HGNC:4627">
    <property type="gene designation" value="GSTA2"/>
</dbReference>
<dbReference type="HPA" id="ENSG00000244067">
    <property type="expression patterns" value="Group enriched (kidney, liver)"/>
</dbReference>
<dbReference type="MIM" id="138360">
    <property type="type" value="gene"/>
</dbReference>
<dbReference type="neXtProt" id="NX_P09210"/>
<dbReference type="OpenTargets" id="ENSG00000244067"/>
<dbReference type="PharmGKB" id="PA29017"/>
<dbReference type="VEuPathDB" id="HostDB:ENSG00000244067"/>
<dbReference type="eggNOG" id="KOG1695">
    <property type="taxonomic scope" value="Eukaryota"/>
</dbReference>
<dbReference type="GeneTree" id="ENSGT00940000164034"/>
<dbReference type="HOGENOM" id="CLU_039475_4_0_1"/>
<dbReference type="InParanoid" id="P09210"/>
<dbReference type="OMA" id="FETILMA"/>
<dbReference type="OrthoDB" id="414243at2759"/>
<dbReference type="PAN-GO" id="P09210">
    <property type="GO annotations" value="4 GO annotations based on evolutionary models"/>
</dbReference>
<dbReference type="PhylomeDB" id="P09210"/>
<dbReference type="TreeFam" id="TF105321"/>
<dbReference type="BioCyc" id="MetaCyc:HS01846-MONOMER"/>
<dbReference type="BRENDA" id="2.5.1.18">
    <property type="organism ID" value="2681"/>
</dbReference>
<dbReference type="PathwayCommons" id="P09210"/>
<dbReference type="Reactome" id="R-HSA-156590">
    <property type="pathway name" value="Glutathione conjugation"/>
</dbReference>
<dbReference type="Reactome" id="R-HSA-8950505">
    <property type="pathway name" value="Gene and protein expression by JAK-STAT signaling after Interleukin-12 stimulation"/>
</dbReference>
<dbReference type="Reactome" id="R-HSA-9748787">
    <property type="pathway name" value="Azathioprine ADME"/>
</dbReference>
<dbReference type="SABIO-RK" id="P09210"/>
<dbReference type="SignaLink" id="P09210"/>
<dbReference type="BioGRID-ORCS" id="2939">
    <property type="hits" value="19 hits in 1038 CRISPR screens"/>
</dbReference>
<dbReference type="CD-CODE" id="91857CE7">
    <property type="entry name" value="Nucleolus"/>
</dbReference>
<dbReference type="ChiTaRS" id="GSTA2">
    <property type="organism name" value="human"/>
</dbReference>
<dbReference type="EvolutionaryTrace" id="P09210"/>
<dbReference type="GeneWiki" id="GSTA2"/>
<dbReference type="GenomeRNAi" id="2939"/>
<dbReference type="Pharos" id="P09210">
    <property type="development level" value="Tbio"/>
</dbReference>
<dbReference type="PRO" id="PR:P09210"/>
<dbReference type="Proteomes" id="UP000005640">
    <property type="component" value="Chromosome 6"/>
</dbReference>
<dbReference type="RNAct" id="P09210">
    <property type="molecule type" value="protein"/>
</dbReference>
<dbReference type="Bgee" id="ENSG00000244067">
    <property type="expression patterns" value="Expressed in body of pancreas and 69 other cell types or tissues"/>
</dbReference>
<dbReference type="ExpressionAtlas" id="P09210">
    <property type="expression patterns" value="baseline and differential"/>
</dbReference>
<dbReference type="GO" id="GO:0005829">
    <property type="term" value="C:cytosol"/>
    <property type="evidence" value="ECO:0000314"/>
    <property type="project" value="HPA"/>
</dbReference>
<dbReference type="GO" id="GO:0070062">
    <property type="term" value="C:extracellular exosome"/>
    <property type="evidence" value="ECO:0007005"/>
    <property type="project" value="UniProtKB"/>
</dbReference>
<dbReference type="GO" id="GO:0004364">
    <property type="term" value="F:glutathione transferase activity"/>
    <property type="evidence" value="ECO:0000250"/>
    <property type="project" value="UniProtKB"/>
</dbReference>
<dbReference type="GO" id="GO:0030855">
    <property type="term" value="P:epithelial cell differentiation"/>
    <property type="evidence" value="ECO:0000270"/>
    <property type="project" value="UniProtKB"/>
</dbReference>
<dbReference type="GO" id="GO:0006749">
    <property type="term" value="P:glutathione metabolic process"/>
    <property type="evidence" value="ECO:0000250"/>
    <property type="project" value="UniProtKB"/>
</dbReference>
<dbReference type="GO" id="GO:0006805">
    <property type="term" value="P:xenobiotic metabolic process"/>
    <property type="evidence" value="ECO:0000318"/>
    <property type="project" value="GO_Central"/>
</dbReference>
<dbReference type="CDD" id="cd03208">
    <property type="entry name" value="GST_C_Alpha"/>
    <property type="match status" value="1"/>
</dbReference>
<dbReference type="CDD" id="cd03077">
    <property type="entry name" value="GST_N_Alpha"/>
    <property type="match status" value="1"/>
</dbReference>
<dbReference type="FunFam" id="1.20.1050.10:FF:000005">
    <property type="entry name" value="Glutathione S-transferase A1"/>
    <property type="match status" value="1"/>
</dbReference>
<dbReference type="Gene3D" id="1.20.1050.10">
    <property type="match status" value="1"/>
</dbReference>
<dbReference type="Gene3D" id="3.40.30.10">
    <property type="entry name" value="Glutaredoxin"/>
    <property type="match status" value="1"/>
</dbReference>
<dbReference type="InterPro" id="IPR010987">
    <property type="entry name" value="Glutathione-S-Trfase_C-like"/>
</dbReference>
<dbReference type="InterPro" id="IPR036282">
    <property type="entry name" value="Glutathione-S-Trfase_C_sf"/>
</dbReference>
<dbReference type="InterPro" id="IPR040079">
    <property type="entry name" value="Glutathione_S-Trfase"/>
</dbReference>
<dbReference type="InterPro" id="IPR004045">
    <property type="entry name" value="Glutathione_S-Trfase_N"/>
</dbReference>
<dbReference type="InterPro" id="IPR003080">
    <property type="entry name" value="GST_alpha"/>
</dbReference>
<dbReference type="InterPro" id="IPR004046">
    <property type="entry name" value="GST_C"/>
</dbReference>
<dbReference type="InterPro" id="IPR050213">
    <property type="entry name" value="GST_superfamily"/>
</dbReference>
<dbReference type="InterPro" id="IPR036249">
    <property type="entry name" value="Thioredoxin-like_sf"/>
</dbReference>
<dbReference type="PANTHER" id="PTHR11571">
    <property type="entry name" value="GLUTATHIONE S-TRANSFERASE"/>
    <property type="match status" value="1"/>
</dbReference>
<dbReference type="PANTHER" id="PTHR11571:SF262">
    <property type="entry name" value="GLUTATHIONE S-TRANSFERASE A2"/>
    <property type="match status" value="1"/>
</dbReference>
<dbReference type="Pfam" id="PF00043">
    <property type="entry name" value="GST_C"/>
    <property type="match status" value="1"/>
</dbReference>
<dbReference type="Pfam" id="PF02798">
    <property type="entry name" value="GST_N"/>
    <property type="match status" value="1"/>
</dbReference>
<dbReference type="PRINTS" id="PR01266">
    <property type="entry name" value="GSTRNSFRASEA"/>
</dbReference>
<dbReference type="SFLD" id="SFLDG01205">
    <property type="entry name" value="AMPS.1"/>
    <property type="match status" value="1"/>
</dbReference>
<dbReference type="SFLD" id="SFLDS00019">
    <property type="entry name" value="Glutathione_Transferase_(cytos"/>
    <property type="match status" value="1"/>
</dbReference>
<dbReference type="SUPFAM" id="SSF47616">
    <property type="entry name" value="GST C-terminal domain-like"/>
    <property type="match status" value="1"/>
</dbReference>
<dbReference type="SUPFAM" id="SSF52833">
    <property type="entry name" value="Thioredoxin-like"/>
    <property type="match status" value="1"/>
</dbReference>
<dbReference type="PROSITE" id="PS50405">
    <property type="entry name" value="GST_CTER"/>
    <property type="match status" value="1"/>
</dbReference>
<dbReference type="PROSITE" id="PS50404">
    <property type="entry name" value="GST_NTER"/>
    <property type="match status" value="1"/>
</dbReference>
<gene>
    <name type="primary">GSTA2</name>
    <name type="synonym">GST2</name>
</gene>